<keyword id="KW-1185">Reference proteome</keyword>
<keyword id="KW-0678">Repressor</keyword>
<keyword id="KW-0687">Ribonucleoprotein</keyword>
<keyword id="KW-0689">Ribosomal protein</keyword>
<keyword id="KW-0694">RNA-binding</keyword>
<keyword id="KW-0699">rRNA-binding</keyword>
<keyword id="KW-0810">Translation regulation</keyword>
<keyword id="KW-0820">tRNA-binding</keyword>
<accession>Q4A5E1</accession>
<gene>
    <name evidence="1" type="primary">rplA</name>
    <name type="ordered locus">MS53_0623</name>
</gene>
<reference key="1">
    <citation type="journal article" date="2005" name="J. Bacteriol.">
        <title>Swine and poultry pathogens: the complete genome sequences of two strains of Mycoplasma hyopneumoniae and a strain of Mycoplasma synoviae.</title>
        <authorList>
            <person name="Vasconcelos A.T.R."/>
            <person name="Ferreira H.B."/>
            <person name="Bizarro C.V."/>
            <person name="Bonatto S.L."/>
            <person name="Carvalho M.O."/>
            <person name="Pinto P.M."/>
            <person name="Almeida D.F."/>
            <person name="Almeida L.G.P."/>
            <person name="Almeida R."/>
            <person name="Alves-Junior L."/>
            <person name="Assuncao E.N."/>
            <person name="Azevedo V.A.C."/>
            <person name="Bogo M.R."/>
            <person name="Brigido M.M."/>
            <person name="Brocchi M."/>
            <person name="Burity H.A."/>
            <person name="Camargo A.A."/>
            <person name="Camargo S.S."/>
            <person name="Carepo M.S."/>
            <person name="Carraro D.M."/>
            <person name="de Mattos Cascardo J.C."/>
            <person name="Castro L.A."/>
            <person name="Cavalcanti G."/>
            <person name="Chemale G."/>
            <person name="Collevatti R.G."/>
            <person name="Cunha C.W."/>
            <person name="Dallagiovanna B."/>
            <person name="Dambros B.P."/>
            <person name="Dellagostin O.A."/>
            <person name="Falcao C."/>
            <person name="Fantinatti-Garboggini F."/>
            <person name="Felipe M.S.S."/>
            <person name="Fiorentin L."/>
            <person name="Franco G.R."/>
            <person name="Freitas N.S.A."/>
            <person name="Frias D."/>
            <person name="Grangeiro T.B."/>
            <person name="Grisard E.C."/>
            <person name="Guimaraes C.T."/>
            <person name="Hungria M."/>
            <person name="Jardim S.N."/>
            <person name="Krieger M.A."/>
            <person name="Laurino J.P."/>
            <person name="Lima L.F.A."/>
            <person name="Lopes M.I."/>
            <person name="Loreto E.L.S."/>
            <person name="Madeira H.M.F."/>
            <person name="Manfio G.P."/>
            <person name="Maranhao A.Q."/>
            <person name="Martinkovics C.T."/>
            <person name="Medeiros S.R.B."/>
            <person name="Moreira M.A.M."/>
            <person name="Neiva M."/>
            <person name="Ramalho-Neto C.E."/>
            <person name="Nicolas M.F."/>
            <person name="Oliveira S.C."/>
            <person name="Paixao R.F.C."/>
            <person name="Pedrosa F.O."/>
            <person name="Pena S.D.J."/>
            <person name="Pereira M."/>
            <person name="Pereira-Ferrari L."/>
            <person name="Piffer I."/>
            <person name="Pinto L.S."/>
            <person name="Potrich D.P."/>
            <person name="Salim A.C.M."/>
            <person name="Santos F.R."/>
            <person name="Schmitt R."/>
            <person name="Schneider M.P.C."/>
            <person name="Schrank A."/>
            <person name="Schrank I.S."/>
            <person name="Schuck A.F."/>
            <person name="Seuanez H.N."/>
            <person name="Silva D.W."/>
            <person name="Silva R."/>
            <person name="Silva S.C."/>
            <person name="Soares C.M.A."/>
            <person name="Souza K.R.L."/>
            <person name="Souza R.C."/>
            <person name="Staats C.C."/>
            <person name="Steffens M.B.R."/>
            <person name="Teixeira S.M.R."/>
            <person name="Urmenyi T.P."/>
            <person name="Vainstein M.H."/>
            <person name="Zuccherato L.W."/>
            <person name="Simpson A.J.G."/>
            <person name="Zaha A."/>
        </authorList>
    </citation>
    <scope>NUCLEOTIDE SEQUENCE [LARGE SCALE GENOMIC DNA]</scope>
    <source>
        <strain>53</strain>
    </source>
</reference>
<comment type="function">
    <text evidence="1">Binds directly to 23S rRNA. The L1 stalk is quite mobile in the ribosome, and is involved in E site tRNA release.</text>
</comment>
<comment type="function">
    <text evidence="1">Protein L1 is also a translational repressor protein, it controls the translation of the L11 operon by binding to its mRNA.</text>
</comment>
<comment type="subunit">
    <text evidence="1">Part of the 50S ribosomal subunit.</text>
</comment>
<comment type="similarity">
    <text evidence="1">Belongs to the universal ribosomal protein uL1 family.</text>
</comment>
<dbReference type="EMBL" id="AE017245">
    <property type="protein sequence ID" value="AAZ44030.1"/>
    <property type="molecule type" value="Genomic_DNA"/>
</dbReference>
<dbReference type="RefSeq" id="WP_011283759.1">
    <property type="nucleotide sequence ID" value="NC_007294.1"/>
</dbReference>
<dbReference type="SMR" id="Q4A5E1"/>
<dbReference type="STRING" id="262723.MS53_0623"/>
<dbReference type="GeneID" id="93530414"/>
<dbReference type="KEGG" id="msy:MS53_0623"/>
<dbReference type="eggNOG" id="COG0081">
    <property type="taxonomic scope" value="Bacteria"/>
</dbReference>
<dbReference type="HOGENOM" id="CLU_062853_0_0_14"/>
<dbReference type="OrthoDB" id="9803740at2"/>
<dbReference type="Proteomes" id="UP000000549">
    <property type="component" value="Chromosome"/>
</dbReference>
<dbReference type="GO" id="GO:0015934">
    <property type="term" value="C:large ribosomal subunit"/>
    <property type="evidence" value="ECO:0007669"/>
    <property type="project" value="InterPro"/>
</dbReference>
<dbReference type="GO" id="GO:0019843">
    <property type="term" value="F:rRNA binding"/>
    <property type="evidence" value="ECO:0007669"/>
    <property type="project" value="UniProtKB-UniRule"/>
</dbReference>
<dbReference type="GO" id="GO:0003735">
    <property type="term" value="F:structural constituent of ribosome"/>
    <property type="evidence" value="ECO:0007669"/>
    <property type="project" value="InterPro"/>
</dbReference>
<dbReference type="GO" id="GO:0000049">
    <property type="term" value="F:tRNA binding"/>
    <property type="evidence" value="ECO:0007669"/>
    <property type="project" value="UniProtKB-KW"/>
</dbReference>
<dbReference type="GO" id="GO:0006417">
    <property type="term" value="P:regulation of translation"/>
    <property type="evidence" value="ECO:0007669"/>
    <property type="project" value="UniProtKB-KW"/>
</dbReference>
<dbReference type="GO" id="GO:0006412">
    <property type="term" value="P:translation"/>
    <property type="evidence" value="ECO:0007669"/>
    <property type="project" value="UniProtKB-UniRule"/>
</dbReference>
<dbReference type="CDD" id="cd00403">
    <property type="entry name" value="Ribosomal_L1"/>
    <property type="match status" value="1"/>
</dbReference>
<dbReference type="FunFam" id="3.40.50.790:FF:000001">
    <property type="entry name" value="50S ribosomal protein L1"/>
    <property type="match status" value="1"/>
</dbReference>
<dbReference type="Gene3D" id="3.30.190.20">
    <property type="match status" value="1"/>
</dbReference>
<dbReference type="Gene3D" id="3.40.50.790">
    <property type="match status" value="1"/>
</dbReference>
<dbReference type="HAMAP" id="MF_01318_B">
    <property type="entry name" value="Ribosomal_uL1_B"/>
    <property type="match status" value="1"/>
</dbReference>
<dbReference type="InterPro" id="IPR005878">
    <property type="entry name" value="Ribosom_uL1_bac-type"/>
</dbReference>
<dbReference type="InterPro" id="IPR002143">
    <property type="entry name" value="Ribosomal_uL1"/>
</dbReference>
<dbReference type="InterPro" id="IPR023674">
    <property type="entry name" value="Ribosomal_uL1-like"/>
</dbReference>
<dbReference type="InterPro" id="IPR028364">
    <property type="entry name" value="Ribosomal_uL1/biogenesis"/>
</dbReference>
<dbReference type="InterPro" id="IPR016095">
    <property type="entry name" value="Ribosomal_uL1_3-a/b-sand"/>
</dbReference>
<dbReference type="InterPro" id="IPR023673">
    <property type="entry name" value="Ribosomal_uL1_CS"/>
</dbReference>
<dbReference type="NCBIfam" id="TIGR01169">
    <property type="entry name" value="rplA_bact"/>
    <property type="match status" value="1"/>
</dbReference>
<dbReference type="PANTHER" id="PTHR36427">
    <property type="entry name" value="54S RIBOSOMAL PROTEIN L1, MITOCHONDRIAL"/>
    <property type="match status" value="1"/>
</dbReference>
<dbReference type="PANTHER" id="PTHR36427:SF3">
    <property type="entry name" value="LARGE RIBOSOMAL SUBUNIT PROTEIN UL1M"/>
    <property type="match status" value="1"/>
</dbReference>
<dbReference type="Pfam" id="PF00687">
    <property type="entry name" value="Ribosomal_L1"/>
    <property type="match status" value="1"/>
</dbReference>
<dbReference type="PIRSF" id="PIRSF002155">
    <property type="entry name" value="Ribosomal_L1"/>
    <property type="match status" value="1"/>
</dbReference>
<dbReference type="SUPFAM" id="SSF56808">
    <property type="entry name" value="Ribosomal protein L1"/>
    <property type="match status" value="1"/>
</dbReference>
<dbReference type="PROSITE" id="PS01199">
    <property type="entry name" value="RIBOSOMAL_L1"/>
    <property type="match status" value="1"/>
</dbReference>
<proteinExistence type="inferred from homology"/>
<sequence>MAKKLSKNQQKVRALFDANQAYDLHEAIELAKKTSYTKFDASVDLAFKLNLDVRKADQQLRGSVLLPKGTGKDVKVLVVTNNPEKQKLATEAKADFVLDAAAFEQKLKEDDYNFDVIVADPAMMPILGKYGKKLGPKGLMPNPKTGTVTPTPEKAVEELKKGKANYRTDKAGVVHSLIGKVSMPTESLVENAQTLISLIKKLKPAAVKGTYMQNLTVSSSMGPGIKIKLEK</sequence>
<name>RL1_MYCS5</name>
<feature type="chain" id="PRO_0000230616" description="Large ribosomal subunit protein uL1">
    <location>
        <begin position="1"/>
        <end position="231"/>
    </location>
</feature>
<evidence type="ECO:0000255" key="1">
    <source>
        <dbReference type="HAMAP-Rule" id="MF_01318"/>
    </source>
</evidence>
<evidence type="ECO:0000305" key="2"/>
<protein>
    <recommendedName>
        <fullName evidence="1">Large ribosomal subunit protein uL1</fullName>
    </recommendedName>
    <alternativeName>
        <fullName evidence="2">50S ribosomal protein L1</fullName>
    </alternativeName>
</protein>
<organism>
    <name type="scientific">Mycoplasmopsis synoviae (strain 53)</name>
    <name type="common">Mycoplasma synoviae</name>
    <dbReference type="NCBI Taxonomy" id="262723"/>
    <lineage>
        <taxon>Bacteria</taxon>
        <taxon>Bacillati</taxon>
        <taxon>Mycoplasmatota</taxon>
        <taxon>Mycoplasmoidales</taxon>
        <taxon>Metamycoplasmataceae</taxon>
        <taxon>Mycoplasmopsis</taxon>
    </lineage>
</organism>